<protein>
    <recommendedName>
        <fullName>Somatotropin</fullName>
    </recommendedName>
    <alternativeName>
        <fullName>Growth hormone</fullName>
    </alternativeName>
</protein>
<accession>Q864S7</accession>
<gene>
    <name type="primary">GH1</name>
    <name type="synonym">GH</name>
</gene>
<feature type="signal peptide" evidence="1">
    <location>
        <begin position="1"/>
        <end position="26"/>
    </location>
</feature>
<feature type="chain" id="PRO_0000032973" description="Somatotropin">
    <location>
        <begin position="27"/>
        <end position="217"/>
    </location>
</feature>
<feature type="binding site" evidence="1">
    <location>
        <position position="46"/>
    </location>
    <ligand>
        <name>Zn(2+)</name>
        <dbReference type="ChEBI" id="CHEBI:29105"/>
    </ligand>
</feature>
<feature type="binding site" evidence="1">
    <location>
        <position position="199"/>
    </location>
    <ligand>
        <name>Zn(2+)</name>
        <dbReference type="ChEBI" id="CHEBI:29105"/>
    </ligand>
</feature>
<feature type="modified residue" description="Phosphoserine" evidence="2">
    <location>
        <position position="132"/>
    </location>
</feature>
<feature type="disulfide bond" evidence="1">
    <location>
        <begin position="79"/>
        <end position="190"/>
    </location>
</feature>
<feature type="disulfide bond" evidence="1">
    <location>
        <begin position="207"/>
        <end position="215"/>
    </location>
</feature>
<dbReference type="EMBL" id="AY271297">
    <property type="protein sequence ID" value="AAP06256.1"/>
    <property type="molecule type" value="Genomic_DNA"/>
</dbReference>
<dbReference type="SMR" id="Q864S7"/>
<dbReference type="Proteomes" id="UP000694520">
    <property type="component" value="Unplaced"/>
</dbReference>
<dbReference type="GO" id="GO:0005615">
    <property type="term" value="C:extracellular space"/>
    <property type="evidence" value="ECO:0000250"/>
    <property type="project" value="AgBase"/>
</dbReference>
<dbReference type="GO" id="GO:0008083">
    <property type="term" value="F:growth factor activity"/>
    <property type="evidence" value="ECO:0007669"/>
    <property type="project" value="TreeGrafter"/>
</dbReference>
<dbReference type="GO" id="GO:0005131">
    <property type="term" value="F:growth hormone receptor binding"/>
    <property type="evidence" value="ECO:0007669"/>
    <property type="project" value="InterPro"/>
</dbReference>
<dbReference type="GO" id="GO:0005179">
    <property type="term" value="F:hormone activity"/>
    <property type="evidence" value="ECO:0007669"/>
    <property type="project" value="UniProtKB-KW"/>
</dbReference>
<dbReference type="GO" id="GO:0046872">
    <property type="term" value="F:metal ion binding"/>
    <property type="evidence" value="ECO:0007669"/>
    <property type="project" value="UniProtKB-KW"/>
</dbReference>
<dbReference type="GO" id="GO:0048513">
    <property type="term" value="P:animal organ development"/>
    <property type="evidence" value="ECO:0007669"/>
    <property type="project" value="TreeGrafter"/>
</dbReference>
<dbReference type="GO" id="GO:0060396">
    <property type="term" value="P:growth hormone receptor signaling pathway"/>
    <property type="evidence" value="ECO:0007669"/>
    <property type="project" value="TreeGrafter"/>
</dbReference>
<dbReference type="GO" id="GO:0030073">
    <property type="term" value="P:insulin secretion"/>
    <property type="evidence" value="ECO:0000250"/>
    <property type="project" value="AgBase"/>
</dbReference>
<dbReference type="GO" id="GO:0009891">
    <property type="term" value="P:positive regulation of biosynthetic process"/>
    <property type="evidence" value="ECO:0007669"/>
    <property type="project" value="UniProtKB-ARBA"/>
</dbReference>
<dbReference type="GO" id="GO:0045927">
    <property type="term" value="P:positive regulation of growth"/>
    <property type="evidence" value="ECO:0007669"/>
    <property type="project" value="TreeGrafter"/>
</dbReference>
<dbReference type="GO" id="GO:0046427">
    <property type="term" value="P:positive regulation of receptor signaling pathway via JAK-STAT"/>
    <property type="evidence" value="ECO:0007669"/>
    <property type="project" value="TreeGrafter"/>
</dbReference>
<dbReference type="GO" id="GO:0031667">
    <property type="term" value="P:response to nutrient levels"/>
    <property type="evidence" value="ECO:0007669"/>
    <property type="project" value="TreeGrafter"/>
</dbReference>
<dbReference type="CDD" id="cd10285">
    <property type="entry name" value="somatotropin_like"/>
    <property type="match status" value="1"/>
</dbReference>
<dbReference type="FunFam" id="1.20.1250.10:FF:000002">
    <property type="entry name" value="Growth hormone"/>
    <property type="match status" value="1"/>
</dbReference>
<dbReference type="Gene3D" id="1.20.1250.10">
    <property type="match status" value="1"/>
</dbReference>
<dbReference type="InterPro" id="IPR009079">
    <property type="entry name" value="4_helix_cytokine-like_core"/>
</dbReference>
<dbReference type="InterPro" id="IPR034975">
    <property type="entry name" value="Somatotropin"/>
</dbReference>
<dbReference type="InterPro" id="IPR001400">
    <property type="entry name" value="Somatotropin/Prolactin"/>
</dbReference>
<dbReference type="InterPro" id="IPR018116">
    <property type="entry name" value="Somatotropin_CS"/>
</dbReference>
<dbReference type="PANTHER" id="PTHR11417:SF2">
    <property type="entry name" value="SOMATOTROPIN"/>
    <property type="match status" value="1"/>
</dbReference>
<dbReference type="PANTHER" id="PTHR11417">
    <property type="entry name" value="SOMATOTROPIN,PROLACTIN"/>
    <property type="match status" value="1"/>
</dbReference>
<dbReference type="Pfam" id="PF00103">
    <property type="entry name" value="Hormone_1"/>
    <property type="match status" value="1"/>
</dbReference>
<dbReference type="PRINTS" id="PR00836">
    <property type="entry name" value="SOMATOTROPIN"/>
</dbReference>
<dbReference type="SUPFAM" id="SSF47266">
    <property type="entry name" value="4-helical cytokines"/>
    <property type="match status" value="1"/>
</dbReference>
<dbReference type="PROSITE" id="PS00266">
    <property type="entry name" value="SOMATOTROPIN_1"/>
    <property type="match status" value="1"/>
</dbReference>
<dbReference type="PROSITE" id="PS00338">
    <property type="entry name" value="SOMATOTROPIN_2"/>
    <property type="match status" value="1"/>
</dbReference>
<organism>
    <name type="scientific">Bos mutus grunniens</name>
    <name type="common">Wild yak</name>
    <name type="synonym">Bos grunniens</name>
    <dbReference type="NCBI Taxonomy" id="30521"/>
    <lineage>
        <taxon>Eukaryota</taxon>
        <taxon>Metazoa</taxon>
        <taxon>Chordata</taxon>
        <taxon>Craniata</taxon>
        <taxon>Vertebrata</taxon>
        <taxon>Euteleostomi</taxon>
        <taxon>Mammalia</taxon>
        <taxon>Eutheria</taxon>
        <taxon>Laurasiatheria</taxon>
        <taxon>Artiodactyla</taxon>
        <taxon>Ruminantia</taxon>
        <taxon>Pecora</taxon>
        <taxon>Bovidae</taxon>
        <taxon>Bovinae</taxon>
        <taxon>Bos</taxon>
    </lineage>
</organism>
<sequence length="217" mass="24486">MMAAGPRTSLLLAFALLCLPWTQVVGAFPAMSLSGLFANAVLRAQHLHQLAADTFKEFERTYIPGGQRYSIQNTQVAFCFSETIPAPTGKNEAQQKSDLELLRISLLLIQSWLGPLQFLSRVFTNSLVFGTSDRVYEKLKDLEEGILALMRELEDGTPRAGQILKQTYDKFDTNMRSDDALLKNYGLLSCFRKDLHKTETYLRVMKCRRFGEASCAF</sequence>
<name>SOMA_BOSMU</name>
<comment type="function">
    <text evidence="1">Plays an important role in growth control. Its major role in stimulating body growth is to stimulate the liver and other tissues to secrete IGF1. It stimulates both the differentiation and proliferation of myoblasts. It also stimulates amino acid uptake and protein synthesis in muscle and other tissues (By similarity).</text>
</comment>
<comment type="subcellular location">
    <subcellularLocation>
        <location>Secreted</location>
    </subcellularLocation>
</comment>
<comment type="similarity">
    <text evidence="3">Belongs to the somatotropin/prolactin family.</text>
</comment>
<evidence type="ECO:0000250" key="1"/>
<evidence type="ECO:0000250" key="2">
    <source>
        <dbReference type="UniProtKB" id="P01241"/>
    </source>
</evidence>
<evidence type="ECO:0000305" key="3"/>
<proteinExistence type="inferred from homology"/>
<keyword id="KW-1015">Disulfide bond</keyword>
<keyword id="KW-0372">Hormone</keyword>
<keyword id="KW-0479">Metal-binding</keyword>
<keyword id="KW-0597">Phosphoprotein</keyword>
<keyword id="KW-1185">Reference proteome</keyword>
<keyword id="KW-0964">Secreted</keyword>
<keyword id="KW-0732">Signal</keyword>
<keyword id="KW-0862">Zinc</keyword>
<reference key="1">
    <citation type="submission" date="2003-04" db="EMBL/GenBank/DDBJ databases">
        <title>Cloning, sequencing, and polymorphism analysis on entire growth hormone gene of Yak.</title>
        <authorList>
            <person name="Ou J.T."/>
            <person name="Zhong J.C."/>
            <person name="Chen Z.H."/>
            <person name="Guo C.H."/>
            <person name="Zhao Y.X."/>
        </authorList>
    </citation>
    <scope>NUCLEOTIDE SEQUENCE [GENOMIC DNA]</scope>
    <source>
        <tissue>Blood</tissue>
    </source>
</reference>